<protein>
    <recommendedName>
        <fullName>Ankyrin repeat- and BTB/POZ domain-containing protein 3</fullName>
    </recommendedName>
    <alternativeName>
        <fullName>BTB/POZ domain-containing protein 11</fullName>
    </alternativeName>
</protein>
<gene>
    <name type="primary">Abtb3</name>
    <name evidence="7" type="synonym">Btbd11</name>
</gene>
<feature type="chain" id="PRO_0000328828" description="Ankyrin repeat- and BTB/POZ domain-containing protein 3">
    <location>
        <begin position="1"/>
        <end position="1109"/>
    </location>
</feature>
<feature type="transmembrane region" description="Helical" evidence="1">
    <location>
        <begin position="168"/>
        <end position="188"/>
    </location>
</feature>
<feature type="repeat" description="ANK 1" evidence="1">
    <location>
        <begin position="608"/>
        <end position="637"/>
    </location>
</feature>
<feature type="repeat" description="ANK 2" evidence="1">
    <location>
        <begin position="654"/>
        <end position="683"/>
    </location>
</feature>
<feature type="repeat" description="ANK 3" evidence="1">
    <location>
        <begin position="692"/>
        <end position="721"/>
    </location>
</feature>
<feature type="repeat" description="ANK 4" evidence="1">
    <location>
        <begin position="735"/>
        <end position="764"/>
    </location>
</feature>
<feature type="repeat" description="ANK 5" evidence="1">
    <location>
        <begin position="830"/>
        <end position="859"/>
    </location>
</feature>
<feature type="domain" description="BTB" evidence="2">
    <location>
        <begin position="928"/>
        <end position="994"/>
    </location>
</feature>
<feature type="region of interest" description="Disordered" evidence="3">
    <location>
        <begin position="260"/>
        <end position="302"/>
    </location>
</feature>
<feature type="compositionally biased region" description="Gly residues" evidence="3">
    <location>
        <begin position="264"/>
        <end position="280"/>
    </location>
</feature>
<feature type="splice variant" id="VSP_032804" description="In isoform 3." evidence="4">
    <location>
        <begin position="1"/>
        <end position="926"/>
    </location>
</feature>
<feature type="splice variant" id="VSP_032805" description="In isoform 2." evidence="5">
    <location>
        <begin position="1"/>
        <end position="862"/>
    </location>
</feature>
<feature type="splice variant" id="VSP_032806" description="In isoform 4." evidence="5">
    <location>
        <begin position="1"/>
        <end position="723"/>
    </location>
</feature>
<feature type="splice variant" id="VSP_032807" description="In isoform 2." evidence="5">
    <original>TEELVTQGLPLMFEILKASK</original>
    <variation>MVRTKDLLPEFENIDKGGWR</variation>
    <location>
        <begin position="863"/>
        <end position="882"/>
    </location>
</feature>
<feature type="splice variant" id="VSP_032808" description="In isoform 4." evidence="5">
    <original>DPHFLNNKEMSDVTFLVEGRPFYAHKVLLFTASPRFKALLSSKPTNDNTCIEIGYVKYPIFQLVMQYLYYGGPESLLIKNNEIMELLSAAKFFQLEALQRHCEIICAKSINTDNCVDIYSHAKFLGVTELSAYCEGYFLKNMMVLIENEAFKQLLYDKNGEGAGQDVLQDLQRTLAIRIQSIHLSSSKGSVV</original>
    <variation>GEQWSGYTQAMAVGSGDGKEANMWNRYRM</variation>
    <location>
        <begin position="918"/>
        <end position="1109"/>
    </location>
</feature>
<feature type="sequence conflict" description="In Ref. 1; BAC30216." evidence="6" ref="1">
    <original>R</original>
    <variation>G</variation>
    <location>
        <position position="515"/>
    </location>
</feature>
<dbReference type="EMBL" id="AK018115">
    <property type="protein sequence ID" value="BAB31077.1"/>
    <property type="molecule type" value="mRNA"/>
</dbReference>
<dbReference type="EMBL" id="AK039038">
    <property type="protein sequence ID" value="BAC30216.1"/>
    <property type="molecule type" value="mRNA"/>
</dbReference>
<dbReference type="EMBL" id="AK030864">
    <property type="protein sequence ID" value="BAC27162.1"/>
    <property type="molecule type" value="mRNA"/>
</dbReference>
<dbReference type="EMBL" id="BC059036">
    <property type="protein sequence ID" value="AAH59036.1"/>
    <property type="molecule type" value="mRNA"/>
</dbReference>
<dbReference type="EMBL" id="BC072592">
    <property type="protein sequence ID" value="AAH72592.1"/>
    <property type="molecule type" value="mRNA"/>
</dbReference>
<dbReference type="EMBL" id="BC096535">
    <property type="status" value="NOT_ANNOTATED_CDS"/>
    <property type="molecule type" value="mRNA"/>
</dbReference>
<dbReference type="CCDS" id="CCDS24091.2">
    <molecule id="Q6GQW0-1"/>
</dbReference>
<dbReference type="RefSeq" id="NP_001017525.1">
    <property type="nucleotide sequence ID" value="NM_001017525.1"/>
</dbReference>
<dbReference type="RefSeq" id="NP_082985.2">
    <molecule id="Q6GQW0-1"/>
    <property type="nucleotide sequence ID" value="NM_028709.2"/>
</dbReference>
<dbReference type="SMR" id="Q6GQW0"/>
<dbReference type="BioGRID" id="216418">
    <property type="interactions" value="6"/>
</dbReference>
<dbReference type="FunCoup" id="Q6GQW0">
    <property type="interactions" value="289"/>
</dbReference>
<dbReference type="IntAct" id="Q6GQW0">
    <property type="interactions" value="2"/>
</dbReference>
<dbReference type="STRING" id="10090.ENSMUSP00000100944"/>
<dbReference type="GlyGen" id="Q6GQW0">
    <property type="glycosylation" value="2 sites, 1 N-linked glycan (1 site)"/>
</dbReference>
<dbReference type="iPTMnet" id="Q6GQW0"/>
<dbReference type="PhosphoSitePlus" id="Q6GQW0"/>
<dbReference type="PaxDb" id="10090-ENSMUSP00000100944"/>
<dbReference type="PeptideAtlas" id="Q6GQW0"/>
<dbReference type="ProteomicsDB" id="265252">
    <molecule id="Q6GQW0-1"/>
</dbReference>
<dbReference type="ProteomicsDB" id="265253">
    <molecule id="Q6GQW0-2"/>
</dbReference>
<dbReference type="ProteomicsDB" id="265254">
    <molecule id="Q6GQW0-3"/>
</dbReference>
<dbReference type="ProteomicsDB" id="265255">
    <molecule id="Q6GQW0-4"/>
</dbReference>
<dbReference type="Antibodypedia" id="76946">
    <property type="antibodies" value="10 antibodies from 8 providers"/>
</dbReference>
<dbReference type="DNASU" id="74007"/>
<dbReference type="Ensembl" id="ENSMUST00000105307.8">
    <molecule id="Q6GQW0-1"/>
    <property type="protein sequence ID" value="ENSMUSP00000100944.2"/>
    <property type="gene ID" value="ENSMUSG00000020042.16"/>
</dbReference>
<dbReference type="GeneID" id="74007"/>
<dbReference type="KEGG" id="mmu:74007"/>
<dbReference type="UCSC" id="uc007glg.2">
    <molecule id="Q6GQW0-1"/>
    <property type="organism name" value="mouse"/>
</dbReference>
<dbReference type="UCSC" id="uc007gli.1">
    <molecule id="Q6GQW0-3"/>
    <property type="organism name" value="mouse"/>
</dbReference>
<dbReference type="AGR" id="MGI:1921257"/>
<dbReference type="CTD" id="121551"/>
<dbReference type="MGI" id="MGI:1921257">
    <property type="gene designation" value="Abtb3"/>
</dbReference>
<dbReference type="VEuPathDB" id="HostDB:ENSMUSG00000020042"/>
<dbReference type="eggNOG" id="ENOG502QSQY">
    <property type="taxonomic scope" value="Eukaryota"/>
</dbReference>
<dbReference type="GeneTree" id="ENSGT00940000156419"/>
<dbReference type="InParanoid" id="Q6GQW0"/>
<dbReference type="OMA" id="NLHREPQ"/>
<dbReference type="OrthoDB" id="2316821at2759"/>
<dbReference type="PhylomeDB" id="Q6GQW0"/>
<dbReference type="TreeFam" id="TF106437"/>
<dbReference type="BioGRID-ORCS" id="74007">
    <property type="hits" value="2 hits in 77 CRISPR screens"/>
</dbReference>
<dbReference type="ChiTaRS" id="Btbd11">
    <property type="organism name" value="mouse"/>
</dbReference>
<dbReference type="PRO" id="PR:Q6GQW0"/>
<dbReference type="Proteomes" id="UP000000589">
    <property type="component" value="Chromosome 10"/>
</dbReference>
<dbReference type="RNAct" id="Q6GQW0">
    <property type="molecule type" value="protein"/>
</dbReference>
<dbReference type="Bgee" id="ENSMUSG00000020042">
    <property type="expression patterns" value="Expressed in facial nucleus and 211 other cell types or tissues"/>
</dbReference>
<dbReference type="ExpressionAtlas" id="Q6GQW0">
    <property type="expression patterns" value="baseline and differential"/>
</dbReference>
<dbReference type="GO" id="GO:0098978">
    <property type="term" value="C:glutamatergic synapse"/>
    <property type="evidence" value="ECO:0000314"/>
    <property type="project" value="MGI"/>
</dbReference>
<dbReference type="GO" id="GO:0016020">
    <property type="term" value="C:membrane"/>
    <property type="evidence" value="ECO:0007669"/>
    <property type="project" value="UniProtKB-SubCell"/>
</dbReference>
<dbReference type="GO" id="GO:0030165">
    <property type="term" value="F:PDZ domain binding"/>
    <property type="evidence" value="ECO:0000353"/>
    <property type="project" value="MGI"/>
</dbReference>
<dbReference type="GO" id="GO:0046982">
    <property type="term" value="F:protein heterodimerization activity"/>
    <property type="evidence" value="ECO:0007669"/>
    <property type="project" value="InterPro"/>
</dbReference>
<dbReference type="GO" id="GO:0035640">
    <property type="term" value="P:exploration behavior"/>
    <property type="evidence" value="ECO:0000315"/>
    <property type="project" value="MGI"/>
</dbReference>
<dbReference type="GO" id="GO:0050821">
    <property type="term" value="P:protein stabilization"/>
    <property type="evidence" value="ECO:0000314"/>
    <property type="project" value="MGI"/>
</dbReference>
<dbReference type="GO" id="GO:0035249">
    <property type="term" value="P:synaptic transmission, glutamatergic"/>
    <property type="evidence" value="ECO:0000315"/>
    <property type="project" value="MGI"/>
</dbReference>
<dbReference type="CDD" id="cd18527">
    <property type="entry name" value="BACK_BTBD11"/>
    <property type="match status" value="1"/>
</dbReference>
<dbReference type="CDD" id="cd18351">
    <property type="entry name" value="BTB_POZ_BTBD11"/>
    <property type="match status" value="1"/>
</dbReference>
<dbReference type="CDD" id="cd22913">
    <property type="entry name" value="HFD_ABTB2-like"/>
    <property type="match status" value="1"/>
</dbReference>
<dbReference type="FunFam" id="1.25.40.20:FF:000045">
    <property type="entry name" value="Ankyrin repeat and BTB/POZ domain-containing protein 2"/>
    <property type="match status" value="1"/>
</dbReference>
<dbReference type="FunFam" id="3.30.710.10:FF:000030">
    <property type="entry name" value="Ankyrin repeat and BTB/POZ domain-containing protein BTBD11"/>
    <property type="match status" value="1"/>
</dbReference>
<dbReference type="FunFam" id="1.10.20.10:FF:000060">
    <property type="entry name" value="BTB domain containing 11"/>
    <property type="match status" value="1"/>
</dbReference>
<dbReference type="Gene3D" id="1.25.40.20">
    <property type="entry name" value="Ankyrin repeat-containing domain"/>
    <property type="match status" value="1"/>
</dbReference>
<dbReference type="Gene3D" id="1.10.20.10">
    <property type="entry name" value="Histone, subunit A"/>
    <property type="match status" value="1"/>
</dbReference>
<dbReference type="Gene3D" id="3.30.710.10">
    <property type="entry name" value="Potassium Channel Kv1.1, Chain A"/>
    <property type="match status" value="1"/>
</dbReference>
<dbReference type="InterPro" id="IPR052089">
    <property type="entry name" value="Ankyrin-BTB/POZ_domain"/>
</dbReference>
<dbReference type="InterPro" id="IPR002110">
    <property type="entry name" value="Ankyrin_rpt"/>
</dbReference>
<dbReference type="InterPro" id="IPR036770">
    <property type="entry name" value="Ankyrin_rpt-contain_sf"/>
</dbReference>
<dbReference type="InterPro" id="IPR000210">
    <property type="entry name" value="BTB/POZ_dom"/>
</dbReference>
<dbReference type="InterPro" id="IPR047824">
    <property type="entry name" value="BTBD11_BACK"/>
</dbReference>
<dbReference type="InterPro" id="IPR009072">
    <property type="entry name" value="Histone-fold"/>
</dbReference>
<dbReference type="InterPro" id="IPR011333">
    <property type="entry name" value="SKP1/BTB/POZ_sf"/>
</dbReference>
<dbReference type="PANTHER" id="PTHR46071">
    <property type="entry name" value="ANKYRIN REPEAT AND BTB/POZ DOMAIN-CONTAINING"/>
    <property type="match status" value="1"/>
</dbReference>
<dbReference type="PANTHER" id="PTHR46071:SF1">
    <property type="entry name" value="ANKYRIN REPEAT AND BTB_POZ DOMAIN-CONTAINING PROTEIN 3"/>
    <property type="match status" value="1"/>
</dbReference>
<dbReference type="Pfam" id="PF00023">
    <property type="entry name" value="Ank"/>
    <property type="match status" value="1"/>
</dbReference>
<dbReference type="Pfam" id="PF12796">
    <property type="entry name" value="Ank_2"/>
    <property type="match status" value="1"/>
</dbReference>
<dbReference type="Pfam" id="PF00651">
    <property type="entry name" value="BTB"/>
    <property type="match status" value="1"/>
</dbReference>
<dbReference type="SMART" id="SM00248">
    <property type="entry name" value="ANK"/>
    <property type="match status" value="4"/>
</dbReference>
<dbReference type="SMART" id="SM00225">
    <property type="entry name" value="BTB"/>
    <property type="match status" value="1"/>
</dbReference>
<dbReference type="SUPFAM" id="SSF48403">
    <property type="entry name" value="Ankyrin repeat"/>
    <property type="match status" value="1"/>
</dbReference>
<dbReference type="SUPFAM" id="SSF47113">
    <property type="entry name" value="Histone-fold"/>
    <property type="match status" value="2"/>
</dbReference>
<dbReference type="SUPFAM" id="SSF54695">
    <property type="entry name" value="POZ domain"/>
    <property type="match status" value="1"/>
</dbReference>
<dbReference type="PROSITE" id="PS50297">
    <property type="entry name" value="ANK_REP_REGION"/>
    <property type="match status" value="1"/>
</dbReference>
<dbReference type="PROSITE" id="PS50088">
    <property type="entry name" value="ANK_REPEAT"/>
    <property type="match status" value="3"/>
</dbReference>
<dbReference type="PROSITE" id="PS50097">
    <property type="entry name" value="BTB"/>
    <property type="match status" value="1"/>
</dbReference>
<organism>
    <name type="scientific">Mus musculus</name>
    <name type="common">Mouse</name>
    <dbReference type="NCBI Taxonomy" id="10090"/>
    <lineage>
        <taxon>Eukaryota</taxon>
        <taxon>Metazoa</taxon>
        <taxon>Chordata</taxon>
        <taxon>Craniata</taxon>
        <taxon>Vertebrata</taxon>
        <taxon>Euteleostomi</taxon>
        <taxon>Mammalia</taxon>
        <taxon>Eutheria</taxon>
        <taxon>Euarchontoglires</taxon>
        <taxon>Glires</taxon>
        <taxon>Rodentia</taxon>
        <taxon>Myomorpha</taxon>
        <taxon>Muroidea</taxon>
        <taxon>Muridae</taxon>
        <taxon>Murinae</taxon>
        <taxon>Mus</taxon>
        <taxon>Mus</taxon>
    </lineage>
</organism>
<accession>Q6GQW0</accession>
<accession>Q6PCZ7</accession>
<accession>Q8CAD2</accession>
<accession>Q8CDA2</accession>
<accession>Q9D3B9</accession>
<comment type="subcellular location">
    <subcellularLocation>
        <location evidence="6">Membrane</location>
        <topology evidence="6">Single-pass membrane protein</topology>
    </subcellularLocation>
</comment>
<comment type="alternative products">
    <event type="alternative splicing"/>
    <isoform>
        <id>Q6GQW0-1</id>
        <name>1</name>
        <sequence type="displayed"/>
    </isoform>
    <isoform>
        <id>Q6GQW0-2</id>
        <name>2</name>
        <sequence type="described" ref="VSP_032805 VSP_032807"/>
    </isoform>
    <isoform>
        <id>Q6GQW0-3</id>
        <name>3</name>
        <sequence type="described" ref="VSP_032804"/>
    </isoform>
    <isoform>
        <id>Q6GQW0-4</id>
        <name>4</name>
        <sequence type="described" ref="VSP_032806 VSP_032808"/>
    </isoform>
</comment>
<evidence type="ECO:0000255" key="1"/>
<evidence type="ECO:0000255" key="2">
    <source>
        <dbReference type="PROSITE-ProRule" id="PRU00037"/>
    </source>
</evidence>
<evidence type="ECO:0000256" key="3">
    <source>
        <dbReference type="SAM" id="MobiDB-lite"/>
    </source>
</evidence>
<evidence type="ECO:0000303" key="4">
    <source>
    </source>
</evidence>
<evidence type="ECO:0000303" key="5">
    <source>
    </source>
</evidence>
<evidence type="ECO:0000305" key="6"/>
<evidence type="ECO:0000312" key="7">
    <source>
        <dbReference type="MGI" id="MGI:1921257"/>
    </source>
</evidence>
<keyword id="KW-0025">Alternative splicing</keyword>
<keyword id="KW-0040">ANK repeat</keyword>
<keyword id="KW-0472">Membrane</keyword>
<keyword id="KW-1185">Reference proteome</keyword>
<keyword id="KW-0677">Repeat</keyword>
<keyword id="KW-0812">Transmembrane</keyword>
<keyword id="KW-1133">Transmembrane helix</keyword>
<proteinExistence type="evidence at transcript level"/>
<sequence>MARRGKKPVVRTLEDLTLDSGYGGAADSVRSSNLSLCCSDSHPASPYGGSCWPPLADSMHSRHNSFDTVNTALVEDSEGLDCAGQHCSRLLPDLDEVPWTLQELELLLLRSRDPRAGPAVPGSLPKDALAKLSMLVSRALVRIAKEAQRLSLRFAKCTKYEIQSAMEIVLSWGLAAHCTAAALAALSLYNMSSAGGDRLGRGKSARCGLTFSVGRVYRWMVDSRVALRIHEHAAIYLTACMESLFRDIYSRVLASGLPRSCSGPGPGSSSGSGPGPGSGPGAPAADKERETPGGGAASGGPCSAASSASGGSSCCAPPATAATAVPPTTATAAVAANHHHHHHTLHEAPKFTVETLEHTVNNDSEIWGLLQPYQHLICGKNASGVLSLPESLNLHRDPQRPSKPGELPMFSQSELRTIEQSLLATRVGSIAELSDLVSRAMHHLQPLNAKHHGNGTPMHHKQGALYWEPEALYTLCYFMHCPQMEWENPNVEPSKVNLQVERPFLVLPPLMEWIRVAVAHAGHRRSFSMDSDDVRQAARLLLPGVDCEPRQLKADDCFCASRKLDAVAIEAKFKQDLGFRMLNCGRTDLVKQAVSLLGPDGINTMSEQGMTPLMYACVRGDEAMVQMLLDAGADLNVEVVSTPHKYPSVHPETRHWTALTFAVLHGHIPVVQLLLDAGAKVEGSVEHGEENYSETPLQLAAAVGNFELVSLLLERGADPLIGTMYRNGISTTPQGDMNSFSQAAAHGHRNVFRKLLAQPEKEKSDILSLEEILAEGTDLAETAPPPLCASRNSKAKLRALREAMYHSAEHGYVDVTIDIRSIGVPWTLHTWLESLRIAFQQHRRPLIQCLLKEFKTIQEEEYTEELVTQGLPLMFEILKASKNEVISQQLCVIFTHCYGPYPIPKLTEIKRKQTSRLDPHFLNNKEMSDVTFLVEGRPFYAHKVLLFTASPRFKALLSSKPTNDNTCIEIGYVKYPIFQLVMQYLYYGGPESLLIKNNEIMELLSAAKFFQLEALQRHCEIICAKSINTDNCVDIYSHAKFLGVTELSAYCEGYFLKNMMVLIENEAFKQLLYDKNGEGAGQDVLQDLQRTLAIRIQSIHLSSSKGSVV</sequence>
<reference key="1">
    <citation type="journal article" date="2005" name="Science">
        <title>The transcriptional landscape of the mammalian genome.</title>
        <authorList>
            <person name="Carninci P."/>
            <person name="Kasukawa T."/>
            <person name="Katayama S."/>
            <person name="Gough J."/>
            <person name="Frith M.C."/>
            <person name="Maeda N."/>
            <person name="Oyama R."/>
            <person name="Ravasi T."/>
            <person name="Lenhard B."/>
            <person name="Wells C."/>
            <person name="Kodzius R."/>
            <person name="Shimokawa K."/>
            <person name="Bajic V.B."/>
            <person name="Brenner S.E."/>
            <person name="Batalov S."/>
            <person name="Forrest A.R."/>
            <person name="Zavolan M."/>
            <person name="Davis M.J."/>
            <person name="Wilming L.G."/>
            <person name="Aidinis V."/>
            <person name="Allen J.E."/>
            <person name="Ambesi-Impiombato A."/>
            <person name="Apweiler R."/>
            <person name="Aturaliya R.N."/>
            <person name="Bailey T.L."/>
            <person name="Bansal M."/>
            <person name="Baxter L."/>
            <person name="Beisel K.W."/>
            <person name="Bersano T."/>
            <person name="Bono H."/>
            <person name="Chalk A.M."/>
            <person name="Chiu K.P."/>
            <person name="Choudhary V."/>
            <person name="Christoffels A."/>
            <person name="Clutterbuck D.R."/>
            <person name="Crowe M.L."/>
            <person name="Dalla E."/>
            <person name="Dalrymple B.P."/>
            <person name="de Bono B."/>
            <person name="Della Gatta G."/>
            <person name="di Bernardo D."/>
            <person name="Down T."/>
            <person name="Engstrom P."/>
            <person name="Fagiolini M."/>
            <person name="Faulkner G."/>
            <person name="Fletcher C.F."/>
            <person name="Fukushima T."/>
            <person name="Furuno M."/>
            <person name="Futaki S."/>
            <person name="Gariboldi M."/>
            <person name="Georgii-Hemming P."/>
            <person name="Gingeras T.R."/>
            <person name="Gojobori T."/>
            <person name="Green R.E."/>
            <person name="Gustincich S."/>
            <person name="Harbers M."/>
            <person name="Hayashi Y."/>
            <person name="Hensch T.K."/>
            <person name="Hirokawa N."/>
            <person name="Hill D."/>
            <person name="Huminiecki L."/>
            <person name="Iacono M."/>
            <person name="Ikeo K."/>
            <person name="Iwama A."/>
            <person name="Ishikawa T."/>
            <person name="Jakt M."/>
            <person name="Kanapin A."/>
            <person name="Katoh M."/>
            <person name="Kawasawa Y."/>
            <person name="Kelso J."/>
            <person name="Kitamura H."/>
            <person name="Kitano H."/>
            <person name="Kollias G."/>
            <person name="Krishnan S.P."/>
            <person name="Kruger A."/>
            <person name="Kummerfeld S.K."/>
            <person name="Kurochkin I.V."/>
            <person name="Lareau L.F."/>
            <person name="Lazarevic D."/>
            <person name="Lipovich L."/>
            <person name="Liu J."/>
            <person name="Liuni S."/>
            <person name="McWilliam S."/>
            <person name="Madan Babu M."/>
            <person name="Madera M."/>
            <person name="Marchionni L."/>
            <person name="Matsuda H."/>
            <person name="Matsuzawa S."/>
            <person name="Miki H."/>
            <person name="Mignone F."/>
            <person name="Miyake S."/>
            <person name="Morris K."/>
            <person name="Mottagui-Tabar S."/>
            <person name="Mulder N."/>
            <person name="Nakano N."/>
            <person name="Nakauchi H."/>
            <person name="Ng P."/>
            <person name="Nilsson R."/>
            <person name="Nishiguchi S."/>
            <person name="Nishikawa S."/>
            <person name="Nori F."/>
            <person name="Ohara O."/>
            <person name="Okazaki Y."/>
            <person name="Orlando V."/>
            <person name="Pang K.C."/>
            <person name="Pavan W.J."/>
            <person name="Pavesi G."/>
            <person name="Pesole G."/>
            <person name="Petrovsky N."/>
            <person name="Piazza S."/>
            <person name="Reed J."/>
            <person name="Reid J.F."/>
            <person name="Ring B.Z."/>
            <person name="Ringwald M."/>
            <person name="Rost B."/>
            <person name="Ruan Y."/>
            <person name="Salzberg S.L."/>
            <person name="Sandelin A."/>
            <person name="Schneider C."/>
            <person name="Schoenbach C."/>
            <person name="Sekiguchi K."/>
            <person name="Semple C.A."/>
            <person name="Seno S."/>
            <person name="Sessa L."/>
            <person name="Sheng Y."/>
            <person name="Shibata Y."/>
            <person name="Shimada H."/>
            <person name="Shimada K."/>
            <person name="Silva D."/>
            <person name="Sinclair B."/>
            <person name="Sperling S."/>
            <person name="Stupka E."/>
            <person name="Sugiura K."/>
            <person name="Sultana R."/>
            <person name="Takenaka Y."/>
            <person name="Taki K."/>
            <person name="Tammoja K."/>
            <person name="Tan S.L."/>
            <person name="Tang S."/>
            <person name="Taylor M.S."/>
            <person name="Tegner J."/>
            <person name="Teichmann S.A."/>
            <person name="Ueda H.R."/>
            <person name="van Nimwegen E."/>
            <person name="Verardo R."/>
            <person name="Wei C.L."/>
            <person name="Yagi K."/>
            <person name="Yamanishi H."/>
            <person name="Zabarovsky E."/>
            <person name="Zhu S."/>
            <person name="Zimmer A."/>
            <person name="Hide W."/>
            <person name="Bult C."/>
            <person name="Grimmond S.M."/>
            <person name="Teasdale R.D."/>
            <person name="Liu E.T."/>
            <person name="Brusic V."/>
            <person name="Quackenbush J."/>
            <person name="Wahlestedt C."/>
            <person name="Mattick J.S."/>
            <person name="Hume D.A."/>
            <person name="Kai C."/>
            <person name="Sasaki D."/>
            <person name="Tomaru Y."/>
            <person name="Fukuda S."/>
            <person name="Kanamori-Katayama M."/>
            <person name="Suzuki M."/>
            <person name="Aoki J."/>
            <person name="Arakawa T."/>
            <person name="Iida J."/>
            <person name="Imamura K."/>
            <person name="Itoh M."/>
            <person name="Kato T."/>
            <person name="Kawaji H."/>
            <person name="Kawagashira N."/>
            <person name="Kawashima T."/>
            <person name="Kojima M."/>
            <person name="Kondo S."/>
            <person name="Konno H."/>
            <person name="Nakano K."/>
            <person name="Ninomiya N."/>
            <person name="Nishio T."/>
            <person name="Okada M."/>
            <person name="Plessy C."/>
            <person name="Shibata K."/>
            <person name="Shiraki T."/>
            <person name="Suzuki S."/>
            <person name="Tagami M."/>
            <person name="Waki K."/>
            <person name="Watahiki A."/>
            <person name="Okamura-Oho Y."/>
            <person name="Suzuki H."/>
            <person name="Kawai J."/>
            <person name="Hayashizaki Y."/>
        </authorList>
    </citation>
    <scope>NUCLEOTIDE SEQUENCE [LARGE SCALE MRNA] (ISOFORMS 2 AND 4)</scope>
    <scope>NUCLEOTIDE SEQUENCE [LARGE SCALE MRNA] OF 515-1109 (ISOFORM 1)</scope>
    <source>
        <strain>C57BL/6J</strain>
        <tissue>Hypothalamus</tissue>
        <tissue>Medulla oblongata</tissue>
        <tissue>Thymus</tissue>
    </source>
</reference>
<reference key="2">
    <citation type="journal article" date="2004" name="Genome Res.">
        <title>The status, quality, and expansion of the NIH full-length cDNA project: the Mammalian Gene Collection (MGC).</title>
        <authorList>
            <consortium name="The MGC Project Team"/>
        </authorList>
    </citation>
    <scope>NUCLEOTIDE SEQUENCE [LARGE SCALE MRNA] (ISOFORMS 1 AND 3)</scope>
    <source>
        <strain>C57BL/6J</strain>
        <tissue>Brain</tissue>
    </source>
</reference>
<name>ABTB3_MOUSE</name>